<dbReference type="EC" id="1.1.1.1" evidence="1"/>
<dbReference type="EC" id="1.1.1.-"/>
<dbReference type="EC" id="1.1.1.284" evidence="1"/>
<dbReference type="PIR" id="S68061">
    <property type="entry name" value="S68061"/>
</dbReference>
<dbReference type="SMR" id="P80467"/>
<dbReference type="iPTMnet" id="P80467"/>
<dbReference type="GO" id="GO:0005829">
    <property type="term" value="C:cytosol"/>
    <property type="evidence" value="ECO:0007669"/>
    <property type="project" value="TreeGrafter"/>
</dbReference>
<dbReference type="GO" id="GO:0004022">
    <property type="term" value="F:alcohol dehydrogenase (NAD+) activity"/>
    <property type="evidence" value="ECO:0007669"/>
    <property type="project" value="UniProtKB-EC"/>
</dbReference>
<dbReference type="GO" id="GO:0106322">
    <property type="term" value="F:S-(hydroxymethyl)glutathione dehydrogenase (NAD+) activity"/>
    <property type="evidence" value="ECO:0007669"/>
    <property type="project" value="RHEA"/>
</dbReference>
<dbReference type="GO" id="GO:0106321">
    <property type="term" value="F:S-(hydroxymethyl)glutathione dehydrogenase (NADP+) activity"/>
    <property type="evidence" value="ECO:0007669"/>
    <property type="project" value="RHEA"/>
</dbReference>
<dbReference type="GO" id="GO:0080007">
    <property type="term" value="F:S-nitrosoglutathione reductase (NADH) activity"/>
    <property type="evidence" value="ECO:0007669"/>
    <property type="project" value="RHEA"/>
</dbReference>
<dbReference type="GO" id="GO:0008270">
    <property type="term" value="F:zinc ion binding"/>
    <property type="evidence" value="ECO:0007669"/>
    <property type="project" value="InterPro"/>
</dbReference>
<dbReference type="GO" id="GO:0046294">
    <property type="term" value="P:formaldehyde catabolic process"/>
    <property type="evidence" value="ECO:0007669"/>
    <property type="project" value="InterPro"/>
</dbReference>
<dbReference type="CDD" id="cd08300">
    <property type="entry name" value="alcohol_DH_class_III"/>
    <property type="match status" value="1"/>
</dbReference>
<dbReference type="FunFam" id="3.40.50.720:FF:000003">
    <property type="entry name" value="S-(hydroxymethyl)glutathione dehydrogenase"/>
    <property type="match status" value="1"/>
</dbReference>
<dbReference type="FunFam" id="3.90.180.10:FF:000001">
    <property type="entry name" value="S-(hydroxymethyl)glutathione dehydrogenase"/>
    <property type="match status" value="1"/>
</dbReference>
<dbReference type="Gene3D" id="3.90.180.10">
    <property type="entry name" value="Medium-chain alcohol dehydrogenases, catalytic domain"/>
    <property type="match status" value="1"/>
</dbReference>
<dbReference type="Gene3D" id="3.40.50.720">
    <property type="entry name" value="NAD(P)-binding Rossmann-like Domain"/>
    <property type="match status" value="1"/>
</dbReference>
<dbReference type="InterPro" id="IPR013149">
    <property type="entry name" value="ADH-like_C"/>
</dbReference>
<dbReference type="InterPro" id="IPR013154">
    <property type="entry name" value="ADH-like_N"/>
</dbReference>
<dbReference type="InterPro" id="IPR014183">
    <property type="entry name" value="ADH_3"/>
</dbReference>
<dbReference type="InterPro" id="IPR002328">
    <property type="entry name" value="ADH_Zn_CS"/>
</dbReference>
<dbReference type="InterPro" id="IPR011032">
    <property type="entry name" value="GroES-like_sf"/>
</dbReference>
<dbReference type="InterPro" id="IPR036291">
    <property type="entry name" value="NAD(P)-bd_dom_sf"/>
</dbReference>
<dbReference type="NCBIfam" id="TIGR02818">
    <property type="entry name" value="adh_III_F_hyde"/>
    <property type="match status" value="1"/>
</dbReference>
<dbReference type="PANTHER" id="PTHR43880">
    <property type="entry name" value="ALCOHOL DEHYDROGENASE"/>
    <property type="match status" value="1"/>
</dbReference>
<dbReference type="PANTHER" id="PTHR43880:SF4">
    <property type="entry name" value="ALCOHOL DEHYDROGENASE CLASS-3"/>
    <property type="match status" value="1"/>
</dbReference>
<dbReference type="Pfam" id="PF08240">
    <property type="entry name" value="ADH_N"/>
    <property type="match status" value="1"/>
</dbReference>
<dbReference type="Pfam" id="PF00107">
    <property type="entry name" value="ADH_zinc_N"/>
    <property type="match status" value="1"/>
</dbReference>
<dbReference type="SUPFAM" id="SSF50129">
    <property type="entry name" value="GroES-like"/>
    <property type="match status" value="2"/>
</dbReference>
<dbReference type="SUPFAM" id="SSF51735">
    <property type="entry name" value="NAD(P)-binding Rossmann-fold domains"/>
    <property type="match status" value="1"/>
</dbReference>
<dbReference type="PROSITE" id="PS00059">
    <property type="entry name" value="ADH_ZINC"/>
    <property type="match status" value="1"/>
</dbReference>
<protein>
    <recommendedName>
        <fullName>Alcohol dehydrogenase class-3</fullName>
        <ecNumber evidence="1">1.1.1.1</ecNumber>
    </recommendedName>
    <alternativeName>
        <fullName>Alcohol dehydrogenase class-III</fullName>
    </alternativeName>
    <alternativeName>
        <fullName>Glutathione-dependent formaldehyde dehydrogenase</fullName>
        <shortName>FALDH</shortName>
        <shortName>FDH</shortName>
        <shortName>GSH-FDH</shortName>
        <ecNumber>1.1.1.-</ecNumber>
    </alternativeName>
    <alternativeName>
        <fullName>S-(hydroxymethyl)glutathione dehydrogenase</fullName>
        <ecNumber evidence="1">1.1.1.284</ecNumber>
    </alternativeName>
</protein>
<accession>P80467</accession>
<keyword id="KW-0007">Acetylation</keyword>
<keyword id="KW-0963">Cytoplasm</keyword>
<keyword id="KW-0903">Direct protein sequencing</keyword>
<keyword id="KW-0479">Metal-binding</keyword>
<keyword id="KW-0520">NAD</keyword>
<keyword id="KW-0560">Oxidoreductase</keyword>
<keyword id="KW-0862">Zinc</keyword>
<name>ADHX_SAAHA</name>
<organism>
    <name type="scientific">Saara hardwickii</name>
    <name type="common">Indian spiny-tailed lizard</name>
    <name type="synonym">Uromastyx hardwickii</name>
    <dbReference type="NCBI Taxonomy" id="40250"/>
    <lineage>
        <taxon>Eukaryota</taxon>
        <taxon>Metazoa</taxon>
        <taxon>Chordata</taxon>
        <taxon>Craniata</taxon>
        <taxon>Vertebrata</taxon>
        <taxon>Euteleostomi</taxon>
        <taxon>Lepidosauria</taxon>
        <taxon>Squamata</taxon>
        <taxon>Bifurcata</taxon>
        <taxon>Unidentata</taxon>
        <taxon>Episquamata</taxon>
        <taxon>Toxicofera</taxon>
        <taxon>Iguania</taxon>
        <taxon>Acrodonta</taxon>
        <taxon>Agamidae</taxon>
        <taxon>Uromastycinae</taxon>
        <taxon>Saara</taxon>
    </lineage>
</organism>
<reference key="1">
    <citation type="journal article" date="1995" name="FEBS Lett.">
        <title>Alcohol dehydrogenase of class III: consistent patterns of structural and functional conservation in relation to class I and other proteins.</title>
        <authorList>
            <person name="Hjelmqvist L."/>
            <person name="Shafqat J."/>
            <person name="Siddiqi A.R."/>
            <person name="Joernvall H."/>
        </authorList>
    </citation>
    <scope>PROTEIN SEQUENCE</scope>
    <scope>ACETYLATION AT ALA-1</scope>
</reference>
<evidence type="ECO:0000250" key="1">
    <source>
        <dbReference type="UniProtKB" id="P11766"/>
    </source>
</evidence>
<evidence type="ECO:0000250" key="2">
    <source>
        <dbReference type="UniProtKB" id="P28474"/>
    </source>
</evidence>
<evidence type="ECO:0000269" key="3">
    <source>
    </source>
</evidence>
<evidence type="ECO:0000305" key="4"/>
<comment type="function">
    <text evidence="1 2">Class-III ADH is remarkably ineffective in oxidizing ethanol, but it readily catalyzes the oxidation of long-chain primary alcohols and the oxidation of S-(hydroxymethyl) glutathione. Also acts as a S-nitroso-glutathione reductase by catalyzing the NADH-dependent reduction of S-nitrosoglutathione, thereby regulating protein S-nitrosylation (By similarity).</text>
</comment>
<comment type="catalytic activity">
    <reaction evidence="1">
        <text>a primary alcohol + NAD(+) = an aldehyde + NADH + H(+)</text>
        <dbReference type="Rhea" id="RHEA:10736"/>
        <dbReference type="ChEBI" id="CHEBI:15378"/>
        <dbReference type="ChEBI" id="CHEBI:15734"/>
        <dbReference type="ChEBI" id="CHEBI:17478"/>
        <dbReference type="ChEBI" id="CHEBI:57540"/>
        <dbReference type="ChEBI" id="CHEBI:57945"/>
        <dbReference type="EC" id="1.1.1.1"/>
    </reaction>
</comment>
<comment type="catalytic activity">
    <reaction evidence="1">
        <text>a secondary alcohol + NAD(+) = a ketone + NADH + H(+)</text>
        <dbReference type="Rhea" id="RHEA:10740"/>
        <dbReference type="ChEBI" id="CHEBI:15378"/>
        <dbReference type="ChEBI" id="CHEBI:17087"/>
        <dbReference type="ChEBI" id="CHEBI:35681"/>
        <dbReference type="ChEBI" id="CHEBI:57540"/>
        <dbReference type="ChEBI" id="CHEBI:57945"/>
        <dbReference type="EC" id="1.1.1.1"/>
    </reaction>
</comment>
<comment type="catalytic activity">
    <reaction evidence="1">
        <text>S-(hydroxymethyl)glutathione + NADP(+) = S-formylglutathione + NADPH + H(+)</text>
        <dbReference type="Rhea" id="RHEA:19981"/>
        <dbReference type="ChEBI" id="CHEBI:15378"/>
        <dbReference type="ChEBI" id="CHEBI:57688"/>
        <dbReference type="ChEBI" id="CHEBI:57783"/>
        <dbReference type="ChEBI" id="CHEBI:58349"/>
        <dbReference type="ChEBI" id="CHEBI:58758"/>
        <dbReference type="EC" id="1.1.1.284"/>
    </reaction>
</comment>
<comment type="catalytic activity">
    <reaction evidence="1">
        <text>S-(hydroxymethyl)glutathione + NAD(+) = S-formylglutathione + NADH + H(+)</text>
        <dbReference type="Rhea" id="RHEA:19985"/>
        <dbReference type="ChEBI" id="CHEBI:15378"/>
        <dbReference type="ChEBI" id="CHEBI:57540"/>
        <dbReference type="ChEBI" id="CHEBI:57688"/>
        <dbReference type="ChEBI" id="CHEBI:57945"/>
        <dbReference type="ChEBI" id="CHEBI:58758"/>
        <dbReference type="EC" id="1.1.1.284"/>
    </reaction>
</comment>
<comment type="catalytic activity">
    <reaction evidence="2">
        <text>S-nitrosoglutathione + NADH + H(+) = S-(hydroxysulfenamide)glutathione + NAD(+)</text>
        <dbReference type="Rhea" id="RHEA:78371"/>
        <dbReference type="ChEBI" id="CHEBI:15378"/>
        <dbReference type="ChEBI" id="CHEBI:57540"/>
        <dbReference type="ChEBI" id="CHEBI:57945"/>
        <dbReference type="ChEBI" id="CHEBI:145544"/>
        <dbReference type="ChEBI" id="CHEBI:229723"/>
    </reaction>
    <physiologicalReaction direction="left-to-right" evidence="2">
        <dbReference type="Rhea" id="RHEA:78372"/>
    </physiologicalReaction>
</comment>
<comment type="cofactor">
    <cofactor evidence="1">
        <name>Zn(2+)</name>
        <dbReference type="ChEBI" id="CHEBI:29105"/>
    </cofactor>
    <text evidence="1">Binds 2 Zn(2+) ions per subunit.</text>
</comment>
<comment type="subunit">
    <text evidence="1">Homodimer.</text>
</comment>
<comment type="subcellular location">
    <subcellularLocation>
        <location evidence="4">Cytoplasm</location>
    </subcellularLocation>
</comment>
<comment type="similarity">
    <text evidence="4">Belongs to the zinc-containing alcohol dehydrogenase family. Class-III subfamily.</text>
</comment>
<sequence>ASGVIKCKAAVAWEAGKPLSIEEIEVAPPKAHEVRVKIIATAVCHTDAYTLSGADPEGSFPVILGHEGAGIVESVGEGVTKFKPGDTVIPLYIPQCGECKFCLNPKTNLCQKIRVTQGKGVMPDGTSRFTCKGKQVLHFMGTSTFSEYTVVADISLTKINASAPLDKVCLLGCGVSTGYGAALNTAKVEPGSTCAVFGLGGVGLAVIMGCKVAGASRIIGIDLNKDKFAKAKEFGATECISPADFKKPIQEVLIEMTDGGVDYSFECIGNVGVMRAALEACHKGWGVSVIVGVAAAGQEIATRPFQLVTGRTWKGTAFGGWKSVESVPKLVDEYMSKKMKVDEFVTHTLPFEQINEAFELMHAGKSIRSVLKF</sequence>
<feature type="chain" id="PRO_0000160767" description="Alcohol dehydrogenase class-3">
    <location>
        <begin position="1"/>
        <end position="373"/>
    </location>
</feature>
<feature type="binding site" evidence="1">
    <location>
        <position position="44"/>
    </location>
    <ligand>
        <name>Zn(2+)</name>
        <dbReference type="ChEBI" id="CHEBI:29105"/>
        <label>1</label>
        <note>catalytic</note>
    </ligand>
</feature>
<feature type="binding site" evidence="1">
    <location>
        <position position="66"/>
    </location>
    <ligand>
        <name>Zn(2+)</name>
        <dbReference type="ChEBI" id="CHEBI:29105"/>
        <label>1</label>
        <note>catalytic</note>
    </ligand>
</feature>
<feature type="binding site" evidence="1">
    <location>
        <position position="96"/>
    </location>
    <ligand>
        <name>Zn(2+)</name>
        <dbReference type="ChEBI" id="CHEBI:29105"/>
        <label>2</label>
    </ligand>
</feature>
<feature type="binding site" evidence="1">
    <location>
        <position position="99"/>
    </location>
    <ligand>
        <name>Zn(2+)</name>
        <dbReference type="ChEBI" id="CHEBI:29105"/>
        <label>2</label>
    </ligand>
</feature>
<feature type="binding site" evidence="1">
    <location>
        <position position="102"/>
    </location>
    <ligand>
        <name>Zn(2+)</name>
        <dbReference type="ChEBI" id="CHEBI:29105"/>
        <label>2</label>
    </ligand>
</feature>
<feature type="binding site" evidence="1">
    <location>
        <position position="110"/>
    </location>
    <ligand>
        <name>Zn(2+)</name>
        <dbReference type="ChEBI" id="CHEBI:29105"/>
        <label>2</label>
    </ligand>
</feature>
<feature type="binding site" evidence="1">
    <location>
        <position position="173"/>
    </location>
    <ligand>
        <name>Zn(2+)</name>
        <dbReference type="ChEBI" id="CHEBI:29105"/>
        <label>1</label>
        <note>catalytic</note>
    </ligand>
</feature>
<feature type="site" description="Important for FDH activity and activation by fatty acids" evidence="1">
    <location>
        <position position="114"/>
    </location>
</feature>
<feature type="modified residue" description="N-acetylalanine" evidence="3">
    <location>
        <position position="1"/>
    </location>
</feature>
<proteinExistence type="evidence at protein level"/>